<protein>
    <recommendedName>
        <fullName evidence="1">3-hydroxy-5-phosphonooxypentane-2,4-dione thiolase</fullName>
        <ecNumber evidence="1">2.3.1.245</ecNumber>
    </recommendedName>
</protein>
<keyword id="KW-0963">Cytoplasm</keyword>
<keyword id="KW-0704">Schiff base</keyword>
<keyword id="KW-0808">Transferase</keyword>
<reference key="1">
    <citation type="journal article" date="2010" name="PLoS Genet.">
        <title>Genome sequence of the plant growth promoting endophytic bacterium Enterobacter sp. 638.</title>
        <authorList>
            <person name="Taghavi S."/>
            <person name="van der Lelie D."/>
            <person name="Hoffman A."/>
            <person name="Zhang Y.B."/>
            <person name="Walla M.D."/>
            <person name="Vangronsveld J."/>
            <person name="Newman L."/>
            <person name="Monchy S."/>
        </authorList>
    </citation>
    <scope>NUCLEOTIDE SEQUENCE [LARGE SCALE GENOMIC DNA]</scope>
    <source>
        <strain>638</strain>
    </source>
</reference>
<name>LSRF_ENT38</name>
<proteinExistence type="inferred from homology"/>
<sequence length="295" mass="31940">MADLDDIKDGKDFGIGTPQTNTPYTLKGCGALDWGMQSRLARIFNPKSNRTVMLAFDHGYFQGPTTGLERIDLSIAPLFAETDVLMCTRGILRSTVPPATNKPVVLRASGGNSILGELSNECVAVAMEDALRLNVCAVAAQVYIGSEFEHQSINNIIKLVDAGNRYGIPTLAVTGVGKEMARDARYFSLASRIAAEMGAQVVKTYFVEEGFEKVTASCPVPIVIAGGKKLPEHEALEMCFRAIDQGASGVDMGRNIFQSSAPLAMLKAVKKVVHENMSAREAFQFWQEEKQGEGQ</sequence>
<feature type="chain" id="PRO_0000351517" description="3-hydroxy-5-phosphonooxypentane-2,4-dione thiolase">
    <location>
        <begin position="1"/>
        <end position="295"/>
    </location>
</feature>
<feature type="active site" description="Schiff-base intermediate with substrate" evidence="1">
    <location>
        <position position="203"/>
    </location>
</feature>
<comment type="function">
    <text evidence="1">Involved in the degradation of phospho-AI-2, thereby terminating induction of the lsr operon and closing the AI-2 signaling cycle. Catalyzes the transfer of an acetyl moiety from 3-hydroxy-5-phosphonooxypentane-2,4-dione to CoA to form glycerone phosphate and acetyl-CoA.</text>
</comment>
<comment type="catalytic activity">
    <reaction evidence="1">
        <text>dihydroxyacetone phosphate + acetyl-CoA = 3-hydroxy-2,4-dioxopentyl phosphate + CoA</text>
        <dbReference type="Rhea" id="RHEA:44736"/>
        <dbReference type="ChEBI" id="CHEBI:57287"/>
        <dbReference type="ChEBI" id="CHEBI:57288"/>
        <dbReference type="ChEBI" id="CHEBI:57642"/>
        <dbReference type="ChEBI" id="CHEBI:84359"/>
        <dbReference type="EC" id="2.3.1.245"/>
    </reaction>
</comment>
<comment type="subunit">
    <text evidence="1">Homodecamer.</text>
</comment>
<comment type="subcellular location">
    <subcellularLocation>
        <location evidence="1">Cytoplasm</location>
    </subcellularLocation>
</comment>
<comment type="similarity">
    <text evidence="1">Belongs to the DeoC/FbaB aldolase family.</text>
</comment>
<dbReference type="EC" id="2.3.1.245" evidence="1"/>
<dbReference type="EMBL" id="CP000653">
    <property type="protein sequence ID" value="ABP62190.1"/>
    <property type="molecule type" value="Genomic_DNA"/>
</dbReference>
<dbReference type="RefSeq" id="WP_015960516.1">
    <property type="nucleotide sequence ID" value="NC_009436.1"/>
</dbReference>
<dbReference type="SMR" id="A4WER0"/>
<dbReference type="STRING" id="399742.Ent638_3532"/>
<dbReference type="KEGG" id="ent:Ent638_3532"/>
<dbReference type="eggNOG" id="COG1830">
    <property type="taxonomic scope" value="Bacteria"/>
</dbReference>
<dbReference type="HOGENOM" id="CLU_057069_1_0_6"/>
<dbReference type="OrthoDB" id="5915071at2"/>
<dbReference type="Proteomes" id="UP000000230">
    <property type="component" value="Chromosome"/>
</dbReference>
<dbReference type="GO" id="GO:0005737">
    <property type="term" value="C:cytoplasm"/>
    <property type="evidence" value="ECO:0007669"/>
    <property type="project" value="UniProtKB-SubCell"/>
</dbReference>
<dbReference type="GO" id="GO:0016747">
    <property type="term" value="F:acyltransferase activity, transferring groups other than amino-acyl groups"/>
    <property type="evidence" value="ECO:0007669"/>
    <property type="project" value="UniProtKB-UniRule"/>
</dbReference>
<dbReference type="GO" id="GO:0004332">
    <property type="term" value="F:fructose-bisphosphate aldolase activity"/>
    <property type="evidence" value="ECO:0007669"/>
    <property type="project" value="InterPro"/>
</dbReference>
<dbReference type="CDD" id="cd00958">
    <property type="entry name" value="DhnA"/>
    <property type="match status" value="1"/>
</dbReference>
<dbReference type="Gene3D" id="3.20.20.70">
    <property type="entry name" value="Aldolase class I"/>
    <property type="match status" value="1"/>
</dbReference>
<dbReference type="HAMAP" id="MF_02052">
    <property type="entry name" value="LsrF"/>
    <property type="match status" value="1"/>
</dbReference>
<dbReference type="InterPro" id="IPR013785">
    <property type="entry name" value="Aldolase_TIM"/>
</dbReference>
<dbReference type="InterPro" id="IPR002915">
    <property type="entry name" value="DeoC/FbaB/LacD_aldolase"/>
</dbReference>
<dbReference type="InterPro" id="IPR050456">
    <property type="entry name" value="DeoC/FbaB_aldolase"/>
</dbReference>
<dbReference type="InterPro" id="IPR041720">
    <property type="entry name" value="FbaB-like"/>
</dbReference>
<dbReference type="InterPro" id="IPR033673">
    <property type="entry name" value="LsrF"/>
</dbReference>
<dbReference type="NCBIfam" id="NF006081">
    <property type="entry name" value="PRK08227.1"/>
    <property type="match status" value="1"/>
</dbReference>
<dbReference type="PANTHER" id="PTHR47916:SF1">
    <property type="entry name" value="3-HYDROXY-5-PHOSPHONOOXYPENTANE-2,4-DIONE THIOLASE"/>
    <property type="match status" value="1"/>
</dbReference>
<dbReference type="PANTHER" id="PTHR47916">
    <property type="entry name" value="FRUCTOSE-BISPHOSPHATE ALDOLASE CLASS 1"/>
    <property type="match status" value="1"/>
</dbReference>
<dbReference type="Pfam" id="PF01791">
    <property type="entry name" value="DeoC"/>
    <property type="match status" value="1"/>
</dbReference>
<dbReference type="PIRSF" id="PIRSF038992">
    <property type="entry name" value="Aldolase_Ia"/>
    <property type="match status" value="1"/>
</dbReference>
<dbReference type="SMART" id="SM01133">
    <property type="entry name" value="DeoC"/>
    <property type="match status" value="1"/>
</dbReference>
<dbReference type="SUPFAM" id="SSF51569">
    <property type="entry name" value="Aldolase"/>
    <property type="match status" value="1"/>
</dbReference>
<organism>
    <name type="scientific">Enterobacter sp. (strain 638)</name>
    <dbReference type="NCBI Taxonomy" id="399742"/>
    <lineage>
        <taxon>Bacteria</taxon>
        <taxon>Pseudomonadati</taxon>
        <taxon>Pseudomonadota</taxon>
        <taxon>Gammaproteobacteria</taxon>
        <taxon>Enterobacterales</taxon>
        <taxon>Enterobacteriaceae</taxon>
        <taxon>Enterobacter</taxon>
    </lineage>
</organism>
<evidence type="ECO:0000255" key="1">
    <source>
        <dbReference type="HAMAP-Rule" id="MF_02052"/>
    </source>
</evidence>
<gene>
    <name evidence="1" type="primary">lsrF</name>
    <name type="ordered locus">Ent638_3532</name>
</gene>
<accession>A4WER0</accession>